<keyword id="KW-0496">Mitochondrion</keyword>
<keyword id="KW-0597">Phosphoprotein</keyword>
<keyword id="KW-0346">Stress response</keyword>
<comment type="function">
    <text evidence="1">Participates in mitochondrial biogenesis and stress response.</text>
</comment>
<comment type="subcellular location">
    <subcellularLocation>
        <location evidence="4">Mitochondrion</location>
    </subcellularLocation>
</comment>
<comment type="similarity">
    <text evidence="4">Belongs to the ISF1/MBR1 family.</text>
</comment>
<reference key="1">
    <citation type="journal article" date="2009" name="Proc. Natl. Acad. Sci. U.S.A.">
        <title>Eukaryote-to-eukaryote gene transfer events revealed by the genome sequence of the wine yeast Saccharomyces cerevisiae EC1118.</title>
        <authorList>
            <person name="Novo M."/>
            <person name="Bigey F."/>
            <person name="Beyne E."/>
            <person name="Galeote V."/>
            <person name="Gavory F."/>
            <person name="Mallet S."/>
            <person name="Cambon B."/>
            <person name="Legras J.-L."/>
            <person name="Wincker P."/>
            <person name="Casaregola S."/>
            <person name="Dequin S."/>
        </authorList>
    </citation>
    <scope>NUCLEOTIDE SEQUENCE [LARGE SCALE GENOMIC DNA]</scope>
    <source>
        <strain>Lalvin EC1118 / Prise de mousse</strain>
    </source>
</reference>
<organism>
    <name type="scientific">Saccharomyces cerevisiae (strain Lalvin EC1118 / Prise de mousse)</name>
    <name type="common">Baker's yeast</name>
    <dbReference type="NCBI Taxonomy" id="643680"/>
    <lineage>
        <taxon>Eukaryota</taxon>
        <taxon>Fungi</taxon>
        <taxon>Dikarya</taxon>
        <taxon>Ascomycota</taxon>
        <taxon>Saccharomycotina</taxon>
        <taxon>Saccharomycetes</taxon>
        <taxon>Saccharomycetales</taxon>
        <taxon>Saccharomycetaceae</taxon>
        <taxon>Saccharomyces</taxon>
    </lineage>
</organism>
<proteinExistence type="inferred from homology"/>
<accession>C8ZC82</accession>
<protein>
    <recommendedName>
        <fullName>Mitochondrial biogenesis regulation protein 1</fullName>
    </recommendedName>
</protein>
<feature type="chain" id="PRO_0000408865" description="Mitochondrial biogenesis regulation protein 1">
    <location>
        <begin position="1"/>
        <end position="339"/>
    </location>
</feature>
<feature type="region of interest" description="Disordered" evidence="3">
    <location>
        <begin position="1"/>
        <end position="20"/>
    </location>
</feature>
<feature type="region of interest" description="Disordered" evidence="3">
    <location>
        <begin position="94"/>
        <end position="156"/>
    </location>
</feature>
<feature type="region of interest" description="Disordered" evidence="3">
    <location>
        <begin position="198"/>
        <end position="224"/>
    </location>
</feature>
<feature type="region of interest" description="Disordered" evidence="3">
    <location>
        <begin position="258"/>
        <end position="325"/>
    </location>
</feature>
<feature type="compositionally biased region" description="Polar residues" evidence="3">
    <location>
        <begin position="99"/>
        <end position="115"/>
    </location>
</feature>
<feature type="compositionally biased region" description="Low complexity" evidence="3">
    <location>
        <begin position="136"/>
        <end position="149"/>
    </location>
</feature>
<feature type="compositionally biased region" description="Polar residues" evidence="3">
    <location>
        <begin position="198"/>
        <end position="213"/>
    </location>
</feature>
<feature type="compositionally biased region" description="Low complexity" evidence="3">
    <location>
        <begin position="214"/>
        <end position="224"/>
    </location>
</feature>
<feature type="compositionally biased region" description="Low complexity" evidence="3">
    <location>
        <begin position="279"/>
        <end position="293"/>
    </location>
</feature>
<feature type="compositionally biased region" description="Low complexity" evidence="3">
    <location>
        <begin position="302"/>
        <end position="314"/>
    </location>
</feature>
<feature type="modified residue" description="Phosphothreonine" evidence="2">
    <location>
        <position position="159"/>
    </location>
</feature>
<feature type="modified residue" description="Phosphoserine" evidence="2">
    <location>
        <position position="177"/>
    </location>
</feature>
<feature type="modified residue" description="Phosphoserine" evidence="2">
    <location>
        <position position="224"/>
    </location>
</feature>
<feature type="modified residue" description="Phosphoserine" evidence="2">
    <location>
        <position position="227"/>
    </location>
</feature>
<evidence type="ECO:0000250" key="1"/>
<evidence type="ECO:0000250" key="2">
    <source>
        <dbReference type="UniProtKB" id="P23493"/>
    </source>
</evidence>
<evidence type="ECO:0000256" key="3">
    <source>
        <dbReference type="SAM" id="MobiDB-lite"/>
    </source>
</evidence>
<evidence type="ECO:0000305" key="4"/>
<dbReference type="EMBL" id="FN393077">
    <property type="protein sequence ID" value="CAY80998.1"/>
    <property type="molecule type" value="Genomic_DNA"/>
</dbReference>
<dbReference type="HOGENOM" id="CLU_778649_0_0_1"/>
<dbReference type="OrthoDB" id="33491at4893"/>
<dbReference type="Proteomes" id="UP000000286">
    <property type="component" value="Chromosome XI, Scaffold EC1118_1K5"/>
</dbReference>
<dbReference type="GO" id="GO:0005739">
    <property type="term" value="C:mitochondrion"/>
    <property type="evidence" value="ECO:0007669"/>
    <property type="project" value="UniProtKB-SubCell"/>
</dbReference>
<dbReference type="InterPro" id="IPR031443">
    <property type="entry name" value="Mbr1"/>
</dbReference>
<dbReference type="Pfam" id="PF17058">
    <property type="entry name" value="MBR1"/>
    <property type="match status" value="1"/>
</dbReference>
<sequence>MRMEKTTDKPLSAGDMNDEYSRGPIDDIDCLNFFERAVQDPCCEACDTEDADEELRAKLSSFNFQPDSSPCNAKCQQTLNPLCKIDEALPAESELAPSRNGSVSEANSDTNSIASTVHDPVDSKYGGMPSLRKAKTTSYFTSSSSNNTTMRNPLKKCNTNINGLLVNGRSSSSSRQSIPELFSGACTKKKNNVLLKSETPNSEFSSNSLQHCNSRSFSLPRSRSRSSAIAIPTHLYGLEKYVSPELDTLTADPEESIERFSNNRPREISSCCPNDTGDTSSSLSHSNTSSSLNFPLGTNTNQFHQPRQPVQQQQSSKPNFGAGRKKSFIEMSLASSFAG</sequence>
<gene>
    <name type="primary">MBR1</name>
    <name type="ORF">EC1118_1K5_1475g</name>
</gene>
<name>MBR1_YEAS8</name>